<name>SLBA_TRIAB</name>
<evidence type="ECO:0000255" key="1"/>
<evidence type="ECO:0000255" key="2">
    <source>
        <dbReference type="PROSITE-ProRule" id="PRU00040"/>
    </source>
</evidence>
<evidence type="ECO:0000269" key="3">
    <source>
    </source>
</evidence>
<evidence type="ECO:0000305" key="4"/>
<evidence type="ECO:0000305" key="5">
    <source>
    </source>
</evidence>
<proteinExistence type="evidence at protein level"/>
<organism>
    <name type="scientific">Trimeresurus albolabris</name>
    <name type="common">White-lipped pit viper</name>
    <name type="synonym">Cryptelytrops albolabris</name>
    <dbReference type="NCBI Taxonomy" id="8765"/>
    <lineage>
        <taxon>Eukaryota</taxon>
        <taxon>Metazoa</taxon>
        <taxon>Chordata</taxon>
        <taxon>Craniata</taxon>
        <taxon>Vertebrata</taxon>
        <taxon>Euteleostomi</taxon>
        <taxon>Lepidosauria</taxon>
        <taxon>Squamata</taxon>
        <taxon>Bifurcata</taxon>
        <taxon>Unidentata</taxon>
        <taxon>Episquamata</taxon>
        <taxon>Toxicofera</taxon>
        <taxon>Serpentes</taxon>
        <taxon>Colubroidea</taxon>
        <taxon>Viperidae</taxon>
        <taxon>Crotalinae</taxon>
        <taxon>Trimeresurus</taxon>
    </lineage>
</organism>
<reference key="1">
    <citation type="journal article" date="2007" name="Platelets">
        <title>Molecular cloning and sequence analysis of alboaggregin B.</title>
        <authorList>
            <person name="Arpijuntarangkoon J."/>
            <person name="Rojnuckarin P."/>
            <person name="Muanpasitporn C."/>
            <person name="Kaeothip S."/>
            <person name="Sangvanich P."/>
            <person name="Intragumtornchai T."/>
        </authorList>
    </citation>
    <scope>NUCLEOTIDE SEQUENCE [MRNA]</scope>
</reference>
<reference key="2">
    <citation type="journal article" date="1996" name="Biochem. Biophys. Res. Commun.">
        <title>Primary structure of alboaggregin-B purified from the venom of Trimeresurus albolabris.</title>
        <authorList>
            <person name="Usami Y."/>
            <person name="Suzuki M."/>
            <person name="Yoshida E."/>
            <person name="Sakurai Y."/>
            <person name="Hirano K."/>
            <person name="Kawasaki T."/>
            <person name="Fujimura Y."/>
            <person name="Titani K."/>
        </authorList>
    </citation>
    <scope>PROTEIN SEQUENCE OF 24-156</scope>
</reference>
<reference key="3">
    <citation type="journal article" date="1998" name="Thromb. Haemost.">
        <title>Alboaggregins A and B. Structure and interaction with human platelets.</title>
        <authorList>
            <person name="Kowalska M.A."/>
            <person name="Tan L."/>
            <person name="Holt J.C."/>
            <person name="Peng M."/>
            <person name="Karczewski J."/>
            <person name="Calvete J.J."/>
            <person name="Niewiarowski S."/>
        </authorList>
    </citation>
    <scope>PROTEIN SEQUENCE OF 24-155</scope>
    <source>
        <tissue>Venom</tissue>
    </source>
</reference>
<reference key="4">
    <citation type="journal article" date="1993" name="Biochem. Biophys. Res. Commun.">
        <title>Alboaggregin-B and botrocetin, two snake venom proteins with highly homologous amino acid sequences but totally distinct functions on von Willebrand factor binding to platelets.</title>
        <authorList>
            <person name="Yoshida E."/>
            <person name="Fujimura Y."/>
            <person name="Miura S."/>
            <person name="Sugimoto M."/>
            <person name="Fukui H."/>
            <person name="Narita N."/>
            <person name="Usami Y."/>
            <person name="Suzuki M."/>
            <person name="Titani K."/>
        </authorList>
    </citation>
    <scope>PROTEIN SEQUENCE OF 24-63</scope>
    <source>
        <tissue>Venom</tissue>
    </source>
</reference>
<reference key="5">
    <citation type="journal article" date="1991" name="Biochemistry">
        <title>Alboaggregin-B: a new platelet agonist that binds to platelet membrane glycoprotein Ib.</title>
        <authorList>
            <person name="Peng M."/>
            <person name="Lu W."/>
            <person name="Kirby E.P."/>
        </authorList>
    </citation>
    <scope>FUNCTION</scope>
    <source>
        <tissue>Venom</tissue>
    </source>
</reference>
<keyword id="KW-0903">Direct protein sequencing</keyword>
<keyword id="KW-1015">Disulfide bond</keyword>
<keyword id="KW-1199">Hemostasis impairing toxin</keyword>
<keyword id="KW-1202">Platelet aggregation activating toxin</keyword>
<keyword id="KW-0964">Secreted</keyword>
<keyword id="KW-0732">Signal</keyword>
<keyword id="KW-0800">Toxin</keyword>
<protein>
    <recommendedName>
        <fullName>Snaclec alboaggregin-B subunit alpha</fullName>
        <shortName>AL-B subunit alpha</shortName>
    </recommendedName>
    <alternativeName>
        <fullName>25-kDa alboaggregin</fullName>
    </alternativeName>
</protein>
<accession>P81115</accession>
<accession>A7LAC8</accession>
<accession>Q9PS19</accession>
<comment type="function">
    <text evidence="3">Weakly agglutinates platelets at high doses by binding to GPIbalpha (GP1BA).</text>
</comment>
<comment type="subunit">
    <text>Heterodimer of subunits alpha and beta; disulfide-linked.</text>
</comment>
<comment type="subcellular location">
    <subcellularLocation>
        <location>Secreted</location>
    </subcellularLocation>
</comment>
<comment type="tissue specificity">
    <text>Expressed by the venom gland.</text>
</comment>
<comment type="miscellaneous">
    <text evidence="5">Monoclonal antibodies to glycoprotein IIb/IIIa, to bovine vWF, and to bovine serum albumin did not show any effect on the binding of AL-B to platelets.</text>
</comment>
<comment type="similarity">
    <text evidence="4">Belongs to the snaclec family.</text>
</comment>
<feature type="signal peptide" evidence="1">
    <location>
        <begin position="1"/>
        <end position="23"/>
    </location>
</feature>
<feature type="chain" id="PRO_0000046712" description="Snaclec alboaggregin-B subunit alpha">
    <location>
        <begin position="24"/>
        <end position="156"/>
    </location>
</feature>
<feature type="domain" description="C-type lectin" evidence="2">
    <location>
        <begin position="24"/>
        <end position="151"/>
    </location>
</feature>
<feature type="disulfide bond" evidence="2">
    <location>
        <begin position="25"/>
        <end position="36"/>
    </location>
</feature>
<feature type="disulfide bond" evidence="2">
    <location>
        <begin position="53"/>
        <end position="150"/>
    </location>
</feature>
<feature type="disulfide bond" description="Interchain (with C-75 in subunit beta)" evidence="2">
    <location>
        <position position="102"/>
    </location>
</feature>
<feature type="disulfide bond" evidence="2">
    <location>
        <begin position="125"/>
        <end position="142"/>
    </location>
</feature>
<feature type="sequence conflict" description="In Ref. 2; AA sequence and 4; AA sequence." evidence="4" ref="2 4">
    <original>VKE</original>
    <variation>IKQ</variation>
    <location>
        <begin position="40"/>
        <end position="42"/>
    </location>
</feature>
<feature type="sequence conflict" description="In Ref. 2; AA sequence and 4; AA sequence." evidence="4" ref="2 4">
    <original>K</original>
    <variation>R</variation>
    <location>
        <position position="51"/>
    </location>
</feature>
<feature type="sequence conflict" description="In Ref. 2; AA sequence and 4; AA sequence." evidence="4" ref="2 4">
    <original>SEQANDG</original>
    <variation>MDQVKGA</variation>
    <location>
        <begin position="54"/>
        <end position="60"/>
    </location>
</feature>
<feature type="sequence conflict" description="In Ref. 2; AA sequence." evidence="4" ref="2">
    <original>EL</original>
    <variation>QQ</variation>
    <location>
        <begin position="76"/>
        <end position="77"/>
    </location>
</feature>
<feature type="sequence conflict" description="In Ref. 2; AA sequence." evidence="4" ref="2">
    <original>N</original>
    <variation>D</variation>
    <location>
        <position position="88"/>
    </location>
</feature>
<feature type="sequence conflict" description="In Ref. 3; AA sequence." evidence="4" ref="3">
    <original>N</original>
    <variation>H</variation>
    <location>
        <position position="88"/>
    </location>
</feature>
<feature type="sequence conflict" description="In Ref. 2; AA sequence." evidence="4" ref="2">
    <original>Q</original>
    <variation>V</variation>
    <location>
        <position position="96"/>
    </location>
</feature>
<feature type="sequence conflict" description="In Ref. 3; AA sequence." evidence="4" ref="3">
    <original>S</original>
    <variation>T</variation>
    <location>
        <position position="113"/>
    </location>
</feature>
<feature type="sequence conflict" description="In Ref. 3; AA sequence." evidence="4" ref="3">
    <original>V</original>
    <variation>I</variation>
    <location>
        <position position="118"/>
    </location>
</feature>
<feature type="sequence conflict" description="In Ref. 2; AA sequence." evidence="4" ref="2">
    <original>NP</original>
    <variation>LS</variation>
    <location>
        <begin position="121"/>
        <end position="122"/>
    </location>
</feature>
<feature type="sequence conflict" description="In Ref. 2; AA sequence." evidence="4" ref="2">
    <original>ES</original>
    <variation>GT</variation>
    <location>
        <begin position="131"/>
        <end position="132"/>
    </location>
</feature>
<feature type="sequence conflict" description="In Ref. 2; AA sequence." evidence="4" ref="2">
    <original>TWSNVY</original>
    <variation>KWFNVA</variation>
    <location>
        <begin position="136"/>
        <end position="141"/>
    </location>
</feature>
<feature type="sequence conflict" description="In Ref. 2; AA sequence." evidence="4" ref="2">
    <original>I</original>
    <variation>L</variation>
    <location>
        <position position="147"/>
    </location>
</feature>
<feature type="sequence conflict" description="In Ref. 2; AA sequence." evidence="4" ref="2">
    <original>GS</original>
    <variation>RP</variation>
    <location>
        <begin position="154"/>
        <end position="155"/>
    </location>
</feature>
<sequence>MGRFIFVSFGLLVVFLSLSGTGADCPSDWSSFKQYCYQIVKELKTWEDAEKFCSEQANDGHLVSIESYREAVFVAELLSENVKTTKYNVWIGLSVQNKGQQCSSEWSDGSSVSYENLVKPNPKKCFVLKKESEFRTWSNVYCEQKHIFMCKFLGSR</sequence>
<dbReference type="EMBL" id="EF690367">
    <property type="protein sequence ID" value="ABS12076.1"/>
    <property type="molecule type" value="mRNA"/>
</dbReference>
<dbReference type="PIR" id="B56829">
    <property type="entry name" value="B56829"/>
</dbReference>
<dbReference type="SMR" id="P81115"/>
<dbReference type="GO" id="GO:0005576">
    <property type="term" value="C:extracellular region"/>
    <property type="evidence" value="ECO:0007669"/>
    <property type="project" value="UniProtKB-SubCell"/>
</dbReference>
<dbReference type="GO" id="GO:0090729">
    <property type="term" value="F:toxin activity"/>
    <property type="evidence" value="ECO:0007669"/>
    <property type="project" value="UniProtKB-KW"/>
</dbReference>
<dbReference type="FunFam" id="3.10.100.10:FF:000087">
    <property type="entry name" value="Snaclec rhodocetin subunit delta"/>
    <property type="match status" value="1"/>
</dbReference>
<dbReference type="Gene3D" id="3.10.100.10">
    <property type="entry name" value="Mannose-Binding Protein A, subunit A"/>
    <property type="match status" value="1"/>
</dbReference>
<dbReference type="InterPro" id="IPR001304">
    <property type="entry name" value="C-type_lectin-like"/>
</dbReference>
<dbReference type="InterPro" id="IPR016186">
    <property type="entry name" value="C-type_lectin-like/link_sf"/>
</dbReference>
<dbReference type="InterPro" id="IPR050111">
    <property type="entry name" value="C-type_lectin/snaclec_domain"/>
</dbReference>
<dbReference type="InterPro" id="IPR018378">
    <property type="entry name" value="C-type_lectin_CS"/>
</dbReference>
<dbReference type="InterPro" id="IPR016187">
    <property type="entry name" value="CTDL_fold"/>
</dbReference>
<dbReference type="PANTHER" id="PTHR22803">
    <property type="entry name" value="MANNOSE, PHOSPHOLIPASE, LECTIN RECEPTOR RELATED"/>
    <property type="match status" value="1"/>
</dbReference>
<dbReference type="Pfam" id="PF00059">
    <property type="entry name" value="Lectin_C"/>
    <property type="match status" value="1"/>
</dbReference>
<dbReference type="PRINTS" id="PR01504">
    <property type="entry name" value="PNCREATITSAP"/>
</dbReference>
<dbReference type="SMART" id="SM00034">
    <property type="entry name" value="CLECT"/>
    <property type="match status" value="1"/>
</dbReference>
<dbReference type="SUPFAM" id="SSF56436">
    <property type="entry name" value="C-type lectin-like"/>
    <property type="match status" value="1"/>
</dbReference>
<dbReference type="PROSITE" id="PS00615">
    <property type="entry name" value="C_TYPE_LECTIN_1"/>
    <property type="match status" value="1"/>
</dbReference>
<dbReference type="PROSITE" id="PS50041">
    <property type="entry name" value="C_TYPE_LECTIN_2"/>
    <property type="match status" value="1"/>
</dbReference>